<organism>
    <name type="scientific">Rhodococcus opacus (strain B4)</name>
    <dbReference type="NCBI Taxonomy" id="632772"/>
    <lineage>
        <taxon>Bacteria</taxon>
        <taxon>Bacillati</taxon>
        <taxon>Actinomycetota</taxon>
        <taxon>Actinomycetes</taxon>
        <taxon>Mycobacteriales</taxon>
        <taxon>Nocardiaceae</taxon>
        <taxon>Rhodococcus</taxon>
    </lineage>
</organism>
<reference key="1">
    <citation type="submission" date="2009-03" db="EMBL/GenBank/DDBJ databases">
        <title>Comparison of the complete genome sequences of Rhodococcus erythropolis PR4 and Rhodococcus opacus B4.</title>
        <authorList>
            <person name="Takarada H."/>
            <person name="Sekine M."/>
            <person name="Hosoyama A."/>
            <person name="Yamada R."/>
            <person name="Fujisawa T."/>
            <person name="Omata S."/>
            <person name="Shimizu A."/>
            <person name="Tsukatani N."/>
            <person name="Tanikawa S."/>
            <person name="Fujita N."/>
            <person name="Harayama S."/>
        </authorList>
    </citation>
    <scope>NUCLEOTIDE SEQUENCE [LARGE SCALE GENOMIC DNA]</scope>
    <source>
        <strain>B4</strain>
    </source>
</reference>
<accession>C1AYS5</accession>
<name>RS7_RHOOB</name>
<feature type="chain" id="PRO_1000135619" description="Small ribosomal subunit protein uS7">
    <location>
        <begin position="1"/>
        <end position="156"/>
    </location>
</feature>
<protein>
    <recommendedName>
        <fullName evidence="1">Small ribosomal subunit protein uS7</fullName>
    </recommendedName>
    <alternativeName>
        <fullName evidence="2">30S ribosomal protein S7</fullName>
    </alternativeName>
</protein>
<dbReference type="EMBL" id="AP011115">
    <property type="protein sequence ID" value="BAH49853.1"/>
    <property type="molecule type" value="Genomic_DNA"/>
</dbReference>
<dbReference type="RefSeq" id="WP_012688822.1">
    <property type="nucleotide sequence ID" value="NC_012522.1"/>
</dbReference>
<dbReference type="SMR" id="C1AYS5"/>
<dbReference type="STRING" id="632772.ROP_16060"/>
<dbReference type="KEGG" id="rop:ROP_16060"/>
<dbReference type="PATRIC" id="fig|632772.20.peg.1686"/>
<dbReference type="HOGENOM" id="CLU_072226_1_1_11"/>
<dbReference type="OrthoDB" id="9807653at2"/>
<dbReference type="Proteomes" id="UP000002212">
    <property type="component" value="Chromosome"/>
</dbReference>
<dbReference type="GO" id="GO:0015935">
    <property type="term" value="C:small ribosomal subunit"/>
    <property type="evidence" value="ECO:0007669"/>
    <property type="project" value="InterPro"/>
</dbReference>
<dbReference type="GO" id="GO:0019843">
    <property type="term" value="F:rRNA binding"/>
    <property type="evidence" value="ECO:0007669"/>
    <property type="project" value="UniProtKB-UniRule"/>
</dbReference>
<dbReference type="GO" id="GO:0003735">
    <property type="term" value="F:structural constituent of ribosome"/>
    <property type="evidence" value="ECO:0007669"/>
    <property type="project" value="InterPro"/>
</dbReference>
<dbReference type="GO" id="GO:0000049">
    <property type="term" value="F:tRNA binding"/>
    <property type="evidence" value="ECO:0007669"/>
    <property type="project" value="UniProtKB-UniRule"/>
</dbReference>
<dbReference type="GO" id="GO:0006412">
    <property type="term" value="P:translation"/>
    <property type="evidence" value="ECO:0007669"/>
    <property type="project" value="UniProtKB-UniRule"/>
</dbReference>
<dbReference type="CDD" id="cd14869">
    <property type="entry name" value="uS7_Bacteria"/>
    <property type="match status" value="1"/>
</dbReference>
<dbReference type="FunFam" id="1.10.455.10:FF:000001">
    <property type="entry name" value="30S ribosomal protein S7"/>
    <property type="match status" value="1"/>
</dbReference>
<dbReference type="Gene3D" id="1.10.455.10">
    <property type="entry name" value="Ribosomal protein S7 domain"/>
    <property type="match status" value="1"/>
</dbReference>
<dbReference type="HAMAP" id="MF_00480_B">
    <property type="entry name" value="Ribosomal_uS7_B"/>
    <property type="match status" value="1"/>
</dbReference>
<dbReference type="InterPro" id="IPR000235">
    <property type="entry name" value="Ribosomal_uS7"/>
</dbReference>
<dbReference type="InterPro" id="IPR005717">
    <property type="entry name" value="Ribosomal_uS7_bac/org-type"/>
</dbReference>
<dbReference type="InterPro" id="IPR020606">
    <property type="entry name" value="Ribosomal_uS7_CS"/>
</dbReference>
<dbReference type="InterPro" id="IPR023798">
    <property type="entry name" value="Ribosomal_uS7_dom"/>
</dbReference>
<dbReference type="InterPro" id="IPR036823">
    <property type="entry name" value="Ribosomal_uS7_dom_sf"/>
</dbReference>
<dbReference type="NCBIfam" id="TIGR01029">
    <property type="entry name" value="rpsG_bact"/>
    <property type="match status" value="1"/>
</dbReference>
<dbReference type="PANTHER" id="PTHR11205">
    <property type="entry name" value="RIBOSOMAL PROTEIN S7"/>
    <property type="match status" value="1"/>
</dbReference>
<dbReference type="Pfam" id="PF00177">
    <property type="entry name" value="Ribosomal_S7"/>
    <property type="match status" value="1"/>
</dbReference>
<dbReference type="PIRSF" id="PIRSF002122">
    <property type="entry name" value="RPS7p_RPS7a_RPS5e_RPS7o"/>
    <property type="match status" value="1"/>
</dbReference>
<dbReference type="SUPFAM" id="SSF47973">
    <property type="entry name" value="Ribosomal protein S7"/>
    <property type="match status" value="1"/>
</dbReference>
<dbReference type="PROSITE" id="PS00052">
    <property type="entry name" value="RIBOSOMAL_S7"/>
    <property type="match status" value="1"/>
</dbReference>
<sequence>MPRKGPAPKRPLINDPVYGSPLVTQLVNKILLDGKKSTAERIVYEALEVAREKTGTDPVVTLKRALDNVKPALEVRSRRVGGATYQVPVEVRPGRSTTLALRWLVTFSRQRREKTMVERLANELLDASNGLGAAVKRREDTHKMAEANKAFAHYRW</sequence>
<comment type="function">
    <text evidence="1">One of the primary rRNA binding proteins, it binds directly to 16S rRNA where it nucleates assembly of the head domain of the 30S subunit. Is located at the subunit interface close to the decoding center, probably blocks exit of the E-site tRNA.</text>
</comment>
<comment type="subunit">
    <text evidence="1">Part of the 30S ribosomal subunit. Contacts proteins S9 and S11.</text>
</comment>
<comment type="similarity">
    <text evidence="1">Belongs to the universal ribosomal protein uS7 family.</text>
</comment>
<gene>
    <name evidence="1" type="primary">rpsG</name>
    <name type="ordered locus">ROP_16060</name>
</gene>
<evidence type="ECO:0000255" key="1">
    <source>
        <dbReference type="HAMAP-Rule" id="MF_00480"/>
    </source>
</evidence>
<evidence type="ECO:0000305" key="2"/>
<keyword id="KW-0687">Ribonucleoprotein</keyword>
<keyword id="KW-0689">Ribosomal protein</keyword>
<keyword id="KW-0694">RNA-binding</keyword>
<keyword id="KW-0699">rRNA-binding</keyword>
<keyword id="KW-0820">tRNA-binding</keyword>
<proteinExistence type="inferred from homology"/>